<evidence type="ECO:0000250" key="1"/>
<evidence type="ECO:0000269" key="2">
    <source>
    </source>
</evidence>
<evidence type="ECO:0000305" key="3"/>
<proteinExistence type="evidence at transcript level"/>
<organism>
    <name type="scientific">Arabidopsis thaliana</name>
    <name type="common">Mouse-ear cress</name>
    <dbReference type="NCBI Taxonomy" id="3702"/>
    <lineage>
        <taxon>Eukaryota</taxon>
        <taxon>Viridiplantae</taxon>
        <taxon>Streptophyta</taxon>
        <taxon>Embryophyta</taxon>
        <taxon>Tracheophyta</taxon>
        <taxon>Spermatophyta</taxon>
        <taxon>Magnoliopsida</taxon>
        <taxon>eudicotyledons</taxon>
        <taxon>Gunneridae</taxon>
        <taxon>Pentapetalae</taxon>
        <taxon>rosids</taxon>
        <taxon>malvids</taxon>
        <taxon>Brassicales</taxon>
        <taxon>Brassicaceae</taxon>
        <taxon>Camelineae</taxon>
        <taxon>Arabidopsis</taxon>
    </lineage>
</organism>
<dbReference type="EC" id="2.4.1.-"/>
<dbReference type="EMBL" id="AL162751">
    <property type="protein sequence ID" value="CAB83309.1"/>
    <property type="molecule type" value="Genomic_DNA"/>
</dbReference>
<dbReference type="EMBL" id="CP002688">
    <property type="protein sequence ID" value="AED90611.1"/>
    <property type="molecule type" value="Genomic_DNA"/>
</dbReference>
<dbReference type="EMBL" id="BT026358">
    <property type="protein sequence ID" value="ABH04465.1"/>
    <property type="molecule type" value="mRNA"/>
</dbReference>
<dbReference type="PIR" id="T48374">
    <property type="entry name" value="T48374"/>
</dbReference>
<dbReference type="RefSeq" id="NP_195969.1">
    <property type="nucleotide sequence ID" value="NM_120429.4"/>
</dbReference>
<dbReference type="SMR" id="Q9LZD8"/>
<dbReference type="FunCoup" id="Q9LZD8">
    <property type="interactions" value="208"/>
</dbReference>
<dbReference type="STRING" id="3702.Q9LZD8"/>
<dbReference type="CAZy" id="GT1">
    <property type="family name" value="Glycosyltransferase Family 1"/>
</dbReference>
<dbReference type="GlyGen" id="Q9LZD8">
    <property type="glycosylation" value="1 site"/>
</dbReference>
<dbReference type="PaxDb" id="3702-AT5G03490.1"/>
<dbReference type="ProteomicsDB" id="228595"/>
<dbReference type="EnsemblPlants" id="AT5G03490.1">
    <property type="protein sequence ID" value="AT5G03490.1"/>
    <property type="gene ID" value="AT5G03490"/>
</dbReference>
<dbReference type="GeneID" id="831823"/>
<dbReference type="Gramene" id="AT5G03490.1">
    <property type="protein sequence ID" value="AT5G03490.1"/>
    <property type="gene ID" value="AT5G03490"/>
</dbReference>
<dbReference type="KEGG" id="ath:AT5G03490"/>
<dbReference type="Araport" id="AT5G03490"/>
<dbReference type="TAIR" id="AT5G03490">
    <property type="gene designation" value="UGT89A2"/>
</dbReference>
<dbReference type="eggNOG" id="KOG1192">
    <property type="taxonomic scope" value="Eukaryota"/>
</dbReference>
<dbReference type="HOGENOM" id="CLU_001724_2_2_1"/>
<dbReference type="InParanoid" id="Q9LZD8"/>
<dbReference type="OMA" id="NPPIALI"/>
<dbReference type="PhylomeDB" id="Q9LZD8"/>
<dbReference type="BioCyc" id="ARA:AT5G03490-MONOMER"/>
<dbReference type="PRO" id="PR:Q9LZD8"/>
<dbReference type="Proteomes" id="UP000006548">
    <property type="component" value="Chromosome 5"/>
</dbReference>
<dbReference type="ExpressionAtlas" id="Q9LZD8">
    <property type="expression patterns" value="baseline and differential"/>
</dbReference>
<dbReference type="GO" id="GO:0035251">
    <property type="term" value="F:UDP-glucosyltransferase activity"/>
    <property type="evidence" value="ECO:0000314"/>
    <property type="project" value="TAIR"/>
</dbReference>
<dbReference type="GO" id="GO:0008194">
    <property type="term" value="F:UDP-glycosyltransferase activity"/>
    <property type="evidence" value="ECO:0000315"/>
    <property type="project" value="TAIR"/>
</dbReference>
<dbReference type="CDD" id="cd03784">
    <property type="entry name" value="GT1_Gtf-like"/>
    <property type="match status" value="1"/>
</dbReference>
<dbReference type="FunFam" id="3.40.50.2000:FF:000064">
    <property type="entry name" value="Glycosyltransferase"/>
    <property type="match status" value="1"/>
</dbReference>
<dbReference type="FunFam" id="3.40.50.2000:FF:000143">
    <property type="entry name" value="UDP-glycosyltransferase 89B1"/>
    <property type="match status" value="1"/>
</dbReference>
<dbReference type="Gene3D" id="3.40.50.2000">
    <property type="entry name" value="Glycogen Phosphorylase B"/>
    <property type="match status" value="2"/>
</dbReference>
<dbReference type="InterPro" id="IPR002213">
    <property type="entry name" value="UDP_glucos_trans"/>
</dbReference>
<dbReference type="PANTHER" id="PTHR48047">
    <property type="entry name" value="GLYCOSYLTRANSFERASE"/>
    <property type="match status" value="1"/>
</dbReference>
<dbReference type="PANTHER" id="PTHR48047:SF209">
    <property type="entry name" value="UDP-GLYCOSYLTRANSFERASE 89A2"/>
    <property type="match status" value="1"/>
</dbReference>
<dbReference type="Pfam" id="PF00201">
    <property type="entry name" value="UDPGT"/>
    <property type="match status" value="1"/>
</dbReference>
<dbReference type="SUPFAM" id="SSF53756">
    <property type="entry name" value="UDP-Glycosyltransferase/glycogen phosphorylase"/>
    <property type="match status" value="1"/>
</dbReference>
<accession>Q9LZD8</accession>
<name>U89A2_ARATH</name>
<reference key="1">
    <citation type="journal article" date="2000" name="Nature">
        <title>Sequence and analysis of chromosome 5 of the plant Arabidopsis thaliana.</title>
        <authorList>
            <person name="Tabata S."/>
            <person name="Kaneko T."/>
            <person name="Nakamura Y."/>
            <person name="Kotani H."/>
            <person name="Kato T."/>
            <person name="Asamizu E."/>
            <person name="Miyajima N."/>
            <person name="Sasamoto S."/>
            <person name="Kimura T."/>
            <person name="Hosouchi T."/>
            <person name="Kawashima K."/>
            <person name="Kohara M."/>
            <person name="Matsumoto M."/>
            <person name="Matsuno A."/>
            <person name="Muraki A."/>
            <person name="Nakayama S."/>
            <person name="Nakazaki N."/>
            <person name="Naruo K."/>
            <person name="Okumura S."/>
            <person name="Shinpo S."/>
            <person name="Takeuchi C."/>
            <person name="Wada T."/>
            <person name="Watanabe A."/>
            <person name="Yamada M."/>
            <person name="Yasuda M."/>
            <person name="Sato S."/>
            <person name="de la Bastide M."/>
            <person name="Huang E."/>
            <person name="Spiegel L."/>
            <person name="Gnoj L."/>
            <person name="O'Shaughnessy A."/>
            <person name="Preston R."/>
            <person name="Habermann K."/>
            <person name="Murray J."/>
            <person name="Johnson D."/>
            <person name="Rohlfing T."/>
            <person name="Nelson J."/>
            <person name="Stoneking T."/>
            <person name="Pepin K."/>
            <person name="Spieth J."/>
            <person name="Sekhon M."/>
            <person name="Armstrong J."/>
            <person name="Becker M."/>
            <person name="Belter E."/>
            <person name="Cordum H."/>
            <person name="Cordes M."/>
            <person name="Courtney L."/>
            <person name="Courtney W."/>
            <person name="Dante M."/>
            <person name="Du H."/>
            <person name="Edwards J."/>
            <person name="Fryman J."/>
            <person name="Haakensen B."/>
            <person name="Lamar E."/>
            <person name="Latreille P."/>
            <person name="Leonard S."/>
            <person name="Meyer R."/>
            <person name="Mulvaney E."/>
            <person name="Ozersky P."/>
            <person name="Riley A."/>
            <person name="Strowmatt C."/>
            <person name="Wagner-McPherson C."/>
            <person name="Wollam A."/>
            <person name="Yoakum M."/>
            <person name="Bell M."/>
            <person name="Dedhia N."/>
            <person name="Parnell L."/>
            <person name="Shah R."/>
            <person name="Rodriguez M."/>
            <person name="Hoon See L."/>
            <person name="Vil D."/>
            <person name="Baker J."/>
            <person name="Kirchoff K."/>
            <person name="Toth K."/>
            <person name="King L."/>
            <person name="Bahret A."/>
            <person name="Miller B."/>
            <person name="Marra M.A."/>
            <person name="Martienssen R."/>
            <person name="McCombie W.R."/>
            <person name="Wilson R.K."/>
            <person name="Murphy G."/>
            <person name="Bancroft I."/>
            <person name="Volckaert G."/>
            <person name="Wambutt R."/>
            <person name="Duesterhoeft A."/>
            <person name="Stiekema W."/>
            <person name="Pohl T."/>
            <person name="Entian K.-D."/>
            <person name="Terryn N."/>
            <person name="Hartley N."/>
            <person name="Bent E."/>
            <person name="Johnson S."/>
            <person name="Langham S.-A."/>
            <person name="McCullagh B."/>
            <person name="Robben J."/>
            <person name="Grymonprez B."/>
            <person name="Zimmermann W."/>
            <person name="Ramsperger U."/>
            <person name="Wedler H."/>
            <person name="Balke K."/>
            <person name="Wedler E."/>
            <person name="Peters S."/>
            <person name="van Staveren M."/>
            <person name="Dirkse W."/>
            <person name="Mooijman P."/>
            <person name="Klein Lankhorst R."/>
            <person name="Weitzenegger T."/>
            <person name="Bothe G."/>
            <person name="Rose M."/>
            <person name="Hauf J."/>
            <person name="Berneiser S."/>
            <person name="Hempel S."/>
            <person name="Feldpausch M."/>
            <person name="Lamberth S."/>
            <person name="Villarroel R."/>
            <person name="Gielen J."/>
            <person name="Ardiles W."/>
            <person name="Bents O."/>
            <person name="Lemcke K."/>
            <person name="Kolesov G."/>
            <person name="Mayer K.F.X."/>
            <person name="Rudd S."/>
            <person name="Schoof H."/>
            <person name="Schueller C."/>
            <person name="Zaccaria P."/>
            <person name="Mewes H.-W."/>
            <person name="Bevan M."/>
            <person name="Fransz P.F."/>
        </authorList>
    </citation>
    <scope>NUCLEOTIDE SEQUENCE [LARGE SCALE GENOMIC DNA]</scope>
    <source>
        <strain>cv. Columbia</strain>
    </source>
</reference>
<reference key="2">
    <citation type="journal article" date="2017" name="Plant J.">
        <title>Araport11: a complete reannotation of the Arabidopsis thaliana reference genome.</title>
        <authorList>
            <person name="Cheng C.Y."/>
            <person name="Krishnakumar V."/>
            <person name="Chan A.P."/>
            <person name="Thibaud-Nissen F."/>
            <person name="Schobel S."/>
            <person name="Town C.D."/>
        </authorList>
    </citation>
    <scope>GENOME REANNOTATION</scope>
    <source>
        <strain>cv. Columbia</strain>
    </source>
</reference>
<reference key="3">
    <citation type="journal article" date="2001" name="J. Biol. Chem.">
        <title>Phylogenetic analysis of the UDP-glycosyltransferase multigene family of Arabidopsis thaliana.</title>
        <authorList>
            <person name="Li Y."/>
            <person name="Baldauf S."/>
            <person name="Lim E.K."/>
            <person name="Bowles D.J."/>
        </authorList>
    </citation>
    <scope>GENE FAMILY</scope>
</reference>
<reference key="4">
    <citation type="journal article" date="2002" name="J. Biol. Chem.">
        <title>The activity of Arabidopsis glycosyltransferases toward salicylic acid, 4-hydroxybenzoic acid, and other benzoates.</title>
        <authorList>
            <person name="Lim E.K."/>
            <person name="Doucet C.J."/>
            <person name="Li Y."/>
            <person name="Elias L."/>
            <person name="Worrall D."/>
            <person name="Spencer S.P."/>
            <person name="Ross J."/>
            <person name="Bowles D.J."/>
        </authorList>
    </citation>
    <scope>FUNCTION</scope>
</reference>
<reference key="5">
    <citation type="submission" date="2006-08" db="EMBL/GenBank/DDBJ databases">
        <title>Arabidopsis ORF Clones.</title>
        <authorList>
            <person name="Quinitio C."/>
            <person name="Chen H."/>
            <person name="Kim C.J."/>
            <person name="Shinn P."/>
            <person name="Ecker J.R."/>
        </authorList>
    </citation>
    <scope>NUCLEOTIDE SEQUENCE [LARGE SCALE MRNA]</scope>
    <source>
        <strain>cv. Columbia</strain>
    </source>
</reference>
<gene>
    <name type="primary">UGT89A2</name>
    <name type="ordered locus">At5g03490</name>
    <name type="ORF">F12E4.260</name>
</gene>
<protein>
    <recommendedName>
        <fullName>UDP-glycosyltransferase 89A2</fullName>
        <ecNumber>2.4.1.-</ecNumber>
    </recommendedName>
</protein>
<feature type="chain" id="PRO_0000409136" description="UDP-glycosyltransferase 89A2">
    <location>
        <begin position="1"/>
        <end position="465"/>
    </location>
</feature>
<feature type="binding site" evidence="1">
    <location>
        <position position="291"/>
    </location>
    <ligand>
        <name>UDP-alpha-D-glucose</name>
        <dbReference type="ChEBI" id="CHEBI:58885"/>
    </ligand>
</feature>
<feature type="binding site" evidence="1">
    <location>
        <begin position="342"/>
        <end position="344"/>
    </location>
    <ligand>
        <name>UDP-alpha-D-glucose</name>
        <dbReference type="ChEBI" id="CHEBI:58885"/>
    </ligand>
</feature>
<feature type="binding site" evidence="1">
    <location>
        <begin position="359"/>
        <end position="367"/>
    </location>
    <ligand>
        <name>UDP-alpha-D-glucose</name>
        <dbReference type="ChEBI" id="CHEBI:58885"/>
    </ligand>
</feature>
<feature type="binding site" evidence="1">
    <location>
        <begin position="381"/>
        <end position="384"/>
    </location>
    <ligand>
        <name>UDP-alpha-D-glucose</name>
        <dbReference type="ChEBI" id="CHEBI:58885"/>
    </ligand>
</feature>
<keyword id="KW-0328">Glycosyltransferase</keyword>
<keyword id="KW-1185">Reference proteome</keyword>
<keyword id="KW-0808">Transferase</keyword>
<sequence>MTEVLLLPGTKSENSKPPHIVVFPFPAQGHLLPLLDLTHQLCLRGFNVSVIVTPGNLTYLSPLLSAHPSSVTSVVFPFPPHPSLSPGVENVKDVGNSGNLPIMASLRQLREPIINWFQSHPNPPIALISDFFLGWTHDLCNQIGIPRFAFFSISFFLVSVLQFCFENIDLIKSTDPIHLLDLPRAPIFKEEHLPSIVRRSLQTPSPDLESIKDFSMNLLSYGSVFNSSEILEDDYLQYVKQRMGHDRVYVIGPLCSIGSGLKSNSGSVDPSLLSWLDGSPNGSVLYVCFGSQKALTKDQCDALALGLEKSMTRFVWVVKKDPIPDGFEDRVSGRGLVVRGWVSQLAVLRHVAVGGFLSHCGWNSVLEGITSGAVILGWPMEADQFVNARLLVEHLGVAVRVCEGGETVPDSDELGRVIAETMGEGGREVAARAEEIRRKTEAAVTEANGSSVENVQRLVKEFEKV</sequence>
<comment type="function">
    <text evidence="2">Glucosyltransferase that glucosylates benzoates and benzoate derivatives in vitro.</text>
</comment>
<comment type="similarity">
    <text evidence="3">Belongs to the UDP-glycosyltransferase family.</text>
</comment>